<organism>
    <name type="scientific">Enterococcus faecalis (strain ATCC 700802 / V583)</name>
    <dbReference type="NCBI Taxonomy" id="226185"/>
    <lineage>
        <taxon>Bacteria</taxon>
        <taxon>Bacillati</taxon>
        <taxon>Bacillota</taxon>
        <taxon>Bacilli</taxon>
        <taxon>Lactobacillales</taxon>
        <taxon>Enterococcaceae</taxon>
        <taxon>Enterococcus</taxon>
    </lineage>
</organism>
<reference key="1">
    <citation type="journal article" date="2003" name="Science">
        <title>Role of mobile DNA in the evolution of vancomycin-resistant Enterococcus faecalis.</title>
        <authorList>
            <person name="Paulsen I.T."/>
            <person name="Banerjei L."/>
            <person name="Myers G.S.A."/>
            <person name="Nelson K.E."/>
            <person name="Seshadri R."/>
            <person name="Read T.D."/>
            <person name="Fouts D.E."/>
            <person name="Eisen J.A."/>
            <person name="Gill S.R."/>
            <person name="Heidelberg J.F."/>
            <person name="Tettelin H."/>
            <person name="Dodson R.J."/>
            <person name="Umayam L.A."/>
            <person name="Brinkac L.M."/>
            <person name="Beanan M.J."/>
            <person name="Daugherty S.C."/>
            <person name="DeBoy R.T."/>
            <person name="Durkin S.A."/>
            <person name="Kolonay J.F."/>
            <person name="Madupu R."/>
            <person name="Nelson W.C."/>
            <person name="Vamathevan J.J."/>
            <person name="Tran B."/>
            <person name="Upton J."/>
            <person name="Hansen T."/>
            <person name="Shetty J."/>
            <person name="Khouri H.M."/>
            <person name="Utterback T.R."/>
            <person name="Radune D."/>
            <person name="Ketchum K.A."/>
            <person name="Dougherty B.A."/>
            <person name="Fraser C.M."/>
        </authorList>
    </citation>
    <scope>NUCLEOTIDE SEQUENCE [LARGE SCALE GENOMIC DNA]</scope>
    <source>
        <strain>ATCC 700802 / V583</strain>
    </source>
</reference>
<protein>
    <recommendedName>
        <fullName evidence="1">Formate--tetrahydrofolate ligase</fullName>
        <ecNumber evidence="1">6.3.4.3</ecNumber>
    </recommendedName>
    <alternativeName>
        <fullName evidence="1">Formyltetrahydrofolate synthetase</fullName>
        <shortName evidence="1">FHS</shortName>
        <shortName evidence="1">FTHFS</shortName>
    </alternativeName>
</protein>
<keyword id="KW-0067">ATP-binding</keyword>
<keyword id="KW-0436">Ligase</keyword>
<keyword id="KW-0547">Nucleotide-binding</keyword>
<keyword id="KW-0554">One-carbon metabolism</keyword>
<keyword id="KW-1185">Reference proteome</keyword>
<proteinExistence type="inferred from homology"/>
<sequence>MKTDINIAQAATLKPIQEIAETIGLSEDSLELYGKYKAKIDFPTLQSLEAQPEGKLILVTSINPTPAGEGKSTVTIGLGDALNQINKKTVIALREPSLGPVMGIKGGATGGGYAQVLPMEEINLHFTGDMHAITTANNALAALLDNHLQQGNELKIDSRRVIWKRAVDLNDRALRQVVVGLGGPFQGVPREDGFDITVASEIMAILCLAQNLTDLKERLSRIIVAYNDQREPVTVKDLNVAGALTLLLKDALKPNLVQTIEGTPAFVHGGPFANIAHGCNSILATKTALHLGDYVVTEAGFGGDLGGEKFLDIKVPSLGKAPDAVVIVATIRALKMHGGLAKDQLAEENLPALQKGFANLEKHIQNMQRYDVPVVVAINEFTQDTEKEIQLLKEACQALGVPVELTSVWAQGGAGGTNLAKTVVAEIEADTKQFQPLYNPRQTIEEKIQAIVQTIYGGEQAIFSPKAQKQIADFTKNGWDQLPICMAKTQYSLSDDPQKLGRPEGFTITIRELVPKIGAGFIVALTGDILTMPGLPKVPAALNMDVDETGQASGLF</sequence>
<accession>Q834D6</accession>
<dbReference type="EC" id="6.3.4.3" evidence="1"/>
<dbReference type="EMBL" id="AE016830">
    <property type="protein sequence ID" value="AAO81500.1"/>
    <property type="molecule type" value="Genomic_DNA"/>
</dbReference>
<dbReference type="RefSeq" id="NP_815430.1">
    <property type="nucleotide sequence ID" value="NC_004668.1"/>
</dbReference>
<dbReference type="RefSeq" id="WP_002369307.1">
    <property type="nucleotide sequence ID" value="NZ_KE136528.1"/>
</dbReference>
<dbReference type="SMR" id="Q834D6"/>
<dbReference type="STRING" id="226185.EF_1725"/>
<dbReference type="EnsemblBacteria" id="AAO81500">
    <property type="protein sequence ID" value="AAO81500"/>
    <property type="gene ID" value="EF_1725"/>
</dbReference>
<dbReference type="KEGG" id="efa:EF1725"/>
<dbReference type="PATRIC" id="fig|226185.45.peg.1787"/>
<dbReference type="eggNOG" id="COG2759">
    <property type="taxonomic scope" value="Bacteria"/>
</dbReference>
<dbReference type="HOGENOM" id="CLU_003601_3_3_9"/>
<dbReference type="UniPathway" id="UPA00193"/>
<dbReference type="Proteomes" id="UP000001415">
    <property type="component" value="Chromosome"/>
</dbReference>
<dbReference type="GO" id="GO:0005524">
    <property type="term" value="F:ATP binding"/>
    <property type="evidence" value="ECO:0007669"/>
    <property type="project" value="UniProtKB-UniRule"/>
</dbReference>
<dbReference type="GO" id="GO:0004329">
    <property type="term" value="F:formate-tetrahydrofolate ligase activity"/>
    <property type="evidence" value="ECO:0007669"/>
    <property type="project" value="UniProtKB-UniRule"/>
</dbReference>
<dbReference type="GO" id="GO:0035999">
    <property type="term" value="P:tetrahydrofolate interconversion"/>
    <property type="evidence" value="ECO:0007669"/>
    <property type="project" value="UniProtKB-UniRule"/>
</dbReference>
<dbReference type="CDD" id="cd00477">
    <property type="entry name" value="FTHFS"/>
    <property type="match status" value="1"/>
</dbReference>
<dbReference type="FunFam" id="3.30.1510.10:FF:000001">
    <property type="entry name" value="Formate--tetrahydrofolate ligase"/>
    <property type="match status" value="1"/>
</dbReference>
<dbReference type="FunFam" id="3.10.410.10:FF:000001">
    <property type="entry name" value="Putative formate--tetrahydrofolate ligase"/>
    <property type="match status" value="1"/>
</dbReference>
<dbReference type="Gene3D" id="3.30.1510.10">
    <property type="entry name" value="Domain 2, N(10)-formyltetrahydrofolate synthetase"/>
    <property type="match status" value="1"/>
</dbReference>
<dbReference type="Gene3D" id="3.10.410.10">
    <property type="entry name" value="Formyltetrahydrofolate synthetase, domain 3"/>
    <property type="match status" value="1"/>
</dbReference>
<dbReference type="Gene3D" id="3.40.50.300">
    <property type="entry name" value="P-loop containing nucleotide triphosphate hydrolases"/>
    <property type="match status" value="1"/>
</dbReference>
<dbReference type="HAMAP" id="MF_01543">
    <property type="entry name" value="FTHFS"/>
    <property type="match status" value="1"/>
</dbReference>
<dbReference type="InterPro" id="IPR000559">
    <property type="entry name" value="Formate_THF_ligase"/>
</dbReference>
<dbReference type="InterPro" id="IPR020628">
    <property type="entry name" value="Formate_THF_ligase_CS"/>
</dbReference>
<dbReference type="InterPro" id="IPR027417">
    <property type="entry name" value="P-loop_NTPase"/>
</dbReference>
<dbReference type="NCBIfam" id="NF010030">
    <property type="entry name" value="PRK13505.1"/>
    <property type="match status" value="1"/>
</dbReference>
<dbReference type="Pfam" id="PF01268">
    <property type="entry name" value="FTHFS"/>
    <property type="match status" value="1"/>
</dbReference>
<dbReference type="SUPFAM" id="SSF52540">
    <property type="entry name" value="P-loop containing nucleoside triphosphate hydrolases"/>
    <property type="match status" value="1"/>
</dbReference>
<dbReference type="PROSITE" id="PS00721">
    <property type="entry name" value="FTHFS_1"/>
    <property type="match status" value="1"/>
</dbReference>
<dbReference type="PROSITE" id="PS00722">
    <property type="entry name" value="FTHFS_2"/>
    <property type="match status" value="1"/>
</dbReference>
<evidence type="ECO:0000255" key="1">
    <source>
        <dbReference type="HAMAP-Rule" id="MF_01543"/>
    </source>
</evidence>
<gene>
    <name evidence="1" type="primary">fhs</name>
    <name type="ordered locus">EF_1725</name>
</gene>
<name>FTHS_ENTFA</name>
<feature type="chain" id="PRO_0000199347" description="Formate--tetrahydrofolate ligase">
    <location>
        <begin position="1"/>
        <end position="556"/>
    </location>
</feature>
<feature type="binding site" evidence="1">
    <location>
        <begin position="65"/>
        <end position="72"/>
    </location>
    <ligand>
        <name>ATP</name>
        <dbReference type="ChEBI" id="CHEBI:30616"/>
    </ligand>
</feature>
<comment type="catalytic activity">
    <reaction evidence="1">
        <text>(6S)-5,6,7,8-tetrahydrofolate + formate + ATP = (6R)-10-formyltetrahydrofolate + ADP + phosphate</text>
        <dbReference type="Rhea" id="RHEA:20221"/>
        <dbReference type="ChEBI" id="CHEBI:15740"/>
        <dbReference type="ChEBI" id="CHEBI:30616"/>
        <dbReference type="ChEBI" id="CHEBI:43474"/>
        <dbReference type="ChEBI" id="CHEBI:57453"/>
        <dbReference type="ChEBI" id="CHEBI:195366"/>
        <dbReference type="ChEBI" id="CHEBI:456216"/>
        <dbReference type="EC" id="6.3.4.3"/>
    </reaction>
</comment>
<comment type="pathway">
    <text evidence="1">One-carbon metabolism; tetrahydrofolate interconversion.</text>
</comment>
<comment type="similarity">
    <text evidence="1">Belongs to the formate--tetrahydrofolate ligase family.</text>
</comment>